<protein>
    <recommendedName>
        <fullName>Porflan</fullName>
    </recommendedName>
</protein>
<comment type="function">
    <text evidence="1">Inflammatory peptide. Induces leukocyte recruitment and adherence to the vascular endothelium when applied to mouse cremaster muscle.</text>
</comment>
<comment type="subcellular location">
    <subcellularLocation>
        <location evidence="1">Secreted</location>
    </subcellularLocation>
</comment>
<comment type="tissue specificity">
    <text evidence="1">Expressed by the venom gland.</text>
</comment>
<comment type="mass spectrometry"/>
<proteinExistence type="evidence at protein level"/>
<organism>
    <name type="scientific">Potamotrygon orbignyi</name>
    <name type="common">Smooth back river stingray</name>
    <dbReference type="NCBI Taxonomy" id="86381"/>
    <lineage>
        <taxon>Eukaryota</taxon>
        <taxon>Metazoa</taxon>
        <taxon>Chordata</taxon>
        <taxon>Craniata</taxon>
        <taxon>Vertebrata</taxon>
        <taxon>Chondrichthyes</taxon>
        <taxon>Elasmobranchii</taxon>
        <taxon>Batoidea</taxon>
        <taxon>Myliobatiformes</taxon>
        <taxon>Potamotrygonidae</taxon>
        <taxon>Potamotrygon</taxon>
    </lineage>
</organism>
<reference key="1">
    <citation type="journal article" date="2009" name="Peptides">
        <title>Characterization of a new bioactive peptide from Potamotrygon gr. orbignyi freshwater stingray venom.</title>
        <authorList>
            <person name="Conceicao K."/>
            <person name="Santos J.M."/>
            <person name="Bruni F.M."/>
            <person name="Klitzke C.F."/>
            <person name="Marques E.E."/>
            <person name="Borges M.H."/>
            <person name="Melo R.L."/>
            <person name="Fernandez J.H."/>
            <person name="Lopes-Ferreira M."/>
        </authorList>
    </citation>
    <scope>PROTEIN SEQUENCE</scope>
    <scope>FUNCTION</scope>
    <scope>SUBCELLULAR LOCATION</scope>
    <scope>TISSUE SPECIFICITY</scope>
    <scope>MASS SPECTROMETRY</scope>
    <source>
        <tissue>Venom</tissue>
    </source>
</reference>
<sequence>ESIVRPPPVEAKVEETPE</sequence>
<evidence type="ECO:0000269" key="1">
    <source>
    </source>
</evidence>
<dbReference type="GO" id="GO:0005576">
    <property type="term" value="C:extracellular region"/>
    <property type="evidence" value="ECO:0000314"/>
    <property type="project" value="UniProtKB"/>
</dbReference>
<dbReference type="GO" id="GO:0090729">
    <property type="term" value="F:toxin activity"/>
    <property type="evidence" value="ECO:0007669"/>
    <property type="project" value="UniProtKB-KW"/>
</dbReference>
<dbReference type="GO" id="GO:0045785">
    <property type="term" value="P:positive regulation of cell adhesion"/>
    <property type="evidence" value="ECO:0000314"/>
    <property type="project" value="UniProtKB"/>
</dbReference>
<dbReference type="GO" id="GO:0002687">
    <property type="term" value="P:positive regulation of leukocyte migration"/>
    <property type="evidence" value="ECO:0000314"/>
    <property type="project" value="UniProtKB"/>
</dbReference>
<feature type="peptide" id="PRO_0000378074" description="Porflan">
    <location>
        <begin position="1"/>
        <end position="18"/>
    </location>
</feature>
<name>PORFL_POTOR</name>
<accession>P86295</accession>
<keyword id="KW-0903">Direct protein sequencing</keyword>
<keyword id="KW-0964">Secreted</keyword>
<keyword id="KW-0800">Toxin</keyword>